<name>ATPB_AZOC5</name>
<proteinExistence type="inferred from homology"/>
<sequence length="478" mass="51105">MANKSGRITQVIGAVVDVQFDSHLPEILNALETTNQGNRLVLEVAQHLGENTVRTIAMDSTEGLVRGQAVEDTGGPIMVPVGEATLGRIMNVIGEAVDELGPVVGEAKRAIHQQAPSYSEQSTEAEMLVTGIKVVDLLAPYSKGGKIGLFGGAGVGKTVLIMELINNIAKAHGGYSVFAGVGERTREGNDLYHEMIESKVNVDPHENNGSSAGSKCALVYGQMNEPPGARARVALTGLTVAEHFRDQGQDVLFFVDNIFRFTQAGSEVSALLGRIPSAVGYQPTLATDMGALQERITTTTKGSITSVQAIYVPADDLTDPAPAASFAHLDATTVLSRSIAEKGIYPAVDPLDSTSRILSPLVIGEEHYNVARQVQQTLQRYKALQDIIAILGMDELSEEDKLTVARARKIERFLSQPFHVAEVFTGSPGKLVDLADTIKGFKGLVEGKYDHLPEQAFYMVGTIEEAIEKGKKLAAEAA</sequence>
<comment type="function">
    <text evidence="1">Produces ATP from ADP in the presence of a proton gradient across the membrane. The catalytic sites are hosted primarily by the beta subunits.</text>
</comment>
<comment type="catalytic activity">
    <reaction evidence="1">
        <text>ATP + H2O + 4 H(+)(in) = ADP + phosphate + 5 H(+)(out)</text>
        <dbReference type="Rhea" id="RHEA:57720"/>
        <dbReference type="ChEBI" id="CHEBI:15377"/>
        <dbReference type="ChEBI" id="CHEBI:15378"/>
        <dbReference type="ChEBI" id="CHEBI:30616"/>
        <dbReference type="ChEBI" id="CHEBI:43474"/>
        <dbReference type="ChEBI" id="CHEBI:456216"/>
        <dbReference type="EC" id="7.1.2.2"/>
    </reaction>
</comment>
<comment type="subunit">
    <text evidence="1">F-type ATPases have 2 components, CF(1) - the catalytic core - and CF(0) - the membrane proton channel. CF(1) has five subunits: alpha(3), beta(3), gamma(1), delta(1), epsilon(1). CF(0) has three main subunits: a(1), b(2) and c(9-12). The alpha and beta chains form an alternating ring which encloses part of the gamma chain. CF(1) is attached to CF(0) by a central stalk formed by the gamma and epsilon chains, while a peripheral stalk is formed by the delta and b chains.</text>
</comment>
<comment type="subcellular location">
    <subcellularLocation>
        <location evidence="1">Cell inner membrane</location>
        <topology evidence="1">Peripheral membrane protein</topology>
    </subcellularLocation>
</comment>
<comment type="similarity">
    <text evidence="1">Belongs to the ATPase alpha/beta chains family.</text>
</comment>
<accession>A8HS10</accession>
<feature type="chain" id="PRO_0000339476" description="ATP synthase subunit beta">
    <location>
        <begin position="1"/>
        <end position="478"/>
    </location>
</feature>
<feature type="binding site" evidence="1">
    <location>
        <begin position="151"/>
        <end position="158"/>
    </location>
    <ligand>
        <name>ATP</name>
        <dbReference type="ChEBI" id="CHEBI:30616"/>
    </ligand>
</feature>
<dbReference type="EC" id="7.1.2.2" evidence="1"/>
<dbReference type="EMBL" id="AP009384">
    <property type="protein sequence ID" value="BAF90123.1"/>
    <property type="molecule type" value="Genomic_DNA"/>
</dbReference>
<dbReference type="RefSeq" id="WP_012172645.1">
    <property type="nucleotide sequence ID" value="NC_009937.1"/>
</dbReference>
<dbReference type="SMR" id="A8HS10"/>
<dbReference type="STRING" id="438753.AZC_4125"/>
<dbReference type="KEGG" id="azc:AZC_4125"/>
<dbReference type="eggNOG" id="COG0055">
    <property type="taxonomic scope" value="Bacteria"/>
</dbReference>
<dbReference type="HOGENOM" id="CLU_022398_0_2_5"/>
<dbReference type="Proteomes" id="UP000000270">
    <property type="component" value="Chromosome"/>
</dbReference>
<dbReference type="GO" id="GO:0005886">
    <property type="term" value="C:plasma membrane"/>
    <property type="evidence" value="ECO:0007669"/>
    <property type="project" value="UniProtKB-SubCell"/>
</dbReference>
<dbReference type="GO" id="GO:0045259">
    <property type="term" value="C:proton-transporting ATP synthase complex"/>
    <property type="evidence" value="ECO:0007669"/>
    <property type="project" value="UniProtKB-KW"/>
</dbReference>
<dbReference type="GO" id="GO:0005524">
    <property type="term" value="F:ATP binding"/>
    <property type="evidence" value="ECO:0007669"/>
    <property type="project" value="UniProtKB-UniRule"/>
</dbReference>
<dbReference type="GO" id="GO:0016887">
    <property type="term" value="F:ATP hydrolysis activity"/>
    <property type="evidence" value="ECO:0007669"/>
    <property type="project" value="InterPro"/>
</dbReference>
<dbReference type="GO" id="GO:0046933">
    <property type="term" value="F:proton-transporting ATP synthase activity, rotational mechanism"/>
    <property type="evidence" value="ECO:0007669"/>
    <property type="project" value="UniProtKB-UniRule"/>
</dbReference>
<dbReference type="CDD" id="cd18110">
    <property type="entry name" value="ATP-synt_F1_beta_C"/>
    <property type="match status" value="1"/>
</dbReference>
<dbReference type="CDD" id="cd18115">
    <property type="entry name" value="ATP-synt_F1_beta_N"/>
    <property type="match status" value="1"/>
</dbReference>
<dbReference type="CDD" id="cd01133">
    <property type="entry name" value="F1-ATPase_beta_CD"/>
    <property type="match status" value="1"/>
</dbReference>
<dbReference type="FunFam" id="1.10.1140.10:FF:000001">
    <property type="entry name" value="ATP synthase subunit beta"/>
    <property type="match status" value="1"/>
</dbReference>
<dbReference type="FunFam" id="2.40.10.170:FF:000004">
    <property type="entry name" value="ATP synthase subunit beta"/>
    <property type="match status" value="1"/>
</dbReference>
<dbReference type="FunFam" id="3.40.50.300:FF:000026">
    <property type="entry name" value="ATP synthase subunit beta"/>
    <property type="match status" value="1"/>
</dbReference>
<dbReference type="Gene3D" id="2.40.10.170">
    <property type="match status" value="1"/>
</dbReference>
<dbReference type="Gene3D" id="1.10.1140.10">
    <property type="entry name" value="Bovine Mitochondrial F1-atpase, Atp Synthase Beta Chain, Chain D, domain 3"/>
    <property type="match status" value="1"/>
</dbReference>
<dbReference type="Gene3D" id="3.40.50.300">
    <property type="entry name" value="P-loop containing nucleotide triphosphate hydrolases"/>
    <property type="match status" value="1"/>
</dbReference>
<dbReference type="HAMAP" id="MF_01347">
    <property type="entry name" value="ATP_synth_beta_bact"/>
    <property type="match status" value="1"/>
</dbReference>
<dbReference type="InterPro" id="IPR003593">
    <property type="entry name" value="AAA+_ATPase"/>
</dbReference>
<dbReference type="InterPro" id="IPR055190">
    <property type="entry name" value="ATP-synt_VA_C"/>
</dbReference>
<dbReference type="InterPro" id="IPR005722">
    <property type="entry name" value="ATP_synth_F1_bsu"/>
</dbReference>
<dbReference type="InterPro" id="IPR020003">
    <property type="entry name" value="ATPase_a/bsu_AS"/>
</dbReference>
<dbReference type="InterPro" id="IPR050053">
    <property type="entry name" value="ATPase_alpha/beta_chains"/>
</dbReference>
<dbReference type="InterPro" id="IPR004100">
    <property type="entry name" value="ATPase_F1/V1/A1_a/bsu_N"/>
</dbReference>
<dbReference type="InterPro" id="IPR036121">
    <property type="entry name" value="ATPase_F1/V1/A1_a/bsu_N_sf"/>
</dbReference>
<dbReference type="InterPro" id="IPR000194">
    <property type="entry name" value="ATPase_F1/V1/A1_a/bsu_nucl-bd"/>
</dbReference>
<dbReference type="InterPro" id="IPR024034">
    <property type="entry name" value="ATPase_F1/V1_b/a_C"/>
</dbReference>
<dbReference type="InterPro" id="IPR027417">
    <property type="entry name" value="P-loop_NTPase"/>
</dbReference>
<dbReference type="NCBIfam" id="TIGR01039">
    <property type="entry name" value="atpD"/>
    <property type="match status" value="1"/>
</dbReference>
<dbReference type="PANTHER" id="PTHR15184">
    <property type="entry name" value="ATP SYNTHASE"/>
    <property type="match status" value="1"/>
</dbReference>
<dbReference type="PANTHER" id="PTHR15184:SF71">
    <property type="entry name" value="ATP SYNTHASE SUBUNIT BETA, MITOCHONDRIAL"/>
    <property type="match status" value="1"/>
</dbReference>
<dbReference type="Pfam" id="PF00006">
    <property type="entry name" value="ATP-synt_ab"/>
    <property type="match status" value="1"/>
</dbReference>
<dbReference type="Pfam" id="PF02874">
    <property type="entry name" value="ATP-synt_ab_N"/>
    <property type="match status" value="1"/>
</dbReference>
<dbReference type="Pfam" id="PF22919">
    <property type="entry name" value="ATP-synt_VA_C"/>
    <property type="match status" value="1"/>
</dbReference>
<dbReference type="PIRSF" id="PIRSF039072">
    <property type="entry name" value="ATPase_subunit_beta"/>
    <property type="match status" value="1"/>
</dbReference>
<dbReference type="SMART" id="SM00382">
    <property type="entry name" value="AAA"/>
    <property type="match status" value="1"/>
</dbReference>
<dbReference type="SUPFAM" id="SSF47917">
    <property type="entry name" value="C-terminal domain of alpha and beta subunits of F1 ATP synthase"/>
    <property type="match status" value="1"/>
</dbReference>
<dbReference type="SUPFAM" id="SSF50615">
    <property type="entry name" value="N-terminal domain of alpha and beta subunits of F1 ATP synthase"/>
    <property type="match status" value="1"/>
</dbReference>
<dbReference type="SUPFAM" id="SSF52540">
    <property type="entry name" value="P-loop containing nucleoside triphosphate hydrolases"/>
    <property type="match status" value="1"/>
</dbReference>
<dbReference type="PROSITE" id="PS00152">
    <property type="entry name" value="ATPASE_ALPHA_BETA"/>
    <property type="match status" value="1"/>
</dbReference>
<gene>
    <name evidence="1" type="primary">atpD</name>
    <name type="ordered locus">AZC_4125</name>
</gene>
<organism>
    <name type="scientific">Azorhizobium caulinodans (strain ATCC 43989 / DSM 5975 / JCM 20966 / LMG 6465 / NBRC 14845 / NCIMB 13405 / ORS 571)</name>
    <dbReference type="NCBI Taxonomy" id="438753"/>
    <lineage>
        <taxon>Bacteria</taxon>
        <taxon>Pseudomonadati</taxon>
        <taxon>Pseudomonadota</taxon>
        <taxon>Alphaproteobacteria</taxon>
        <taxon>Hyphomicrobiales</taxon>
        <taxon>Xanthobacteraceae</taxon>
        <taxon>Azorhizobium</taxon>
    </lineage>
</organism>
<evidence type="ECO:0000255" key="1">
    <source>
        <dbReference type="HAMAP-Rule" id="MF_01347"/>
    </source>
</evidence>
<keyword id="KW-0066">ATP synthesis</keyword>
<keyword id="KW-0067">ATP-binding</keyword>
<keyword id="KW-0997">Cell inner membrane</keyword>
<keyword id="KW-1003">Cell membrane</keyword>
<keyword id="KW-0139">CF(1)</keyword>
<keyword id="KW-0375">Hydrogen ion transport</keyword>
<keyword id="KW-0406">Ion transport</keyword>
<keyword id="KW-0472">Membrane</keyword>
<keyword id="KW-0547">Nucleotide-binding</keyword>
<keyword id="KW-1185">Reference proteome</keyword>
<keyword id="KW-1278">Translocase</keyword>
<keyword id="KW-0813">Transport</keyword>
<protein>
    <recommendedName>
        <fullName evidence="1">ATP synthase subunit beta</fullName>
        <ecNumber evidence="1">7.1.2.2</ecNumber>
    </recommendedName>
    <alternativeName>
        <fullName evidence="1">ATP synthase F1 sector subunit beta</fullName>
    </alternativeName>
    <alternativeName>
        <fullName evidence="1">F-ATPase subunit beta</fullName>
    </alternativeName>
</protein>
<reference key="1">
    <citation type="submission" date="2007-04" db="EMBL/GenBank/DDBJ databases">
        <title>Complete genome sequence of the nitrogen-fixing bacterium Azorhizobium caulinodans ORS571.</title>
        <authorList>
            <person name="Lee K.B."/>
            <person name="Backer P.D."/>
            <person name="Aono T."/>
            <person name="Liu C.T."/>
            <person name="Suzuki S."/>
            <person name="Suzuki T."/>
            <person name="Kaneko T."/>
            <person name="Yamada M."/>
            <person name="Tabata S."/>
            <person name="Kupfer D.M."/>
            <person name="Najar F.Z."/>
            <person name="Wiley G.B."/>
            <person name="Roe B."/>
            <person name="Binnewies T."/>
            <person name="Ussery D."/>
            <person name="Vereecke D."/>
            <person name="Gevers D."/>
            <person name="Holsters M."/>
            <person name="Oyaizu H."/>
        </authorList>
    </citation>
    <scope>NUCLEOTIDE SEQUENCE [LARGE SCALE GENOMIC DNA]</scope>
    <source>
        <strain>ATCC 43989 / DSM 5975 / JCM 20966 / LMG 6465 / NBRC 14845 / NCIMB 13405 / ORS 571</strain>
    </source>
</reference>